<protein>
    <recommendedName>
        <fullName evidence="2">Small ribosomal subunit protein uS12</fullName>
    </recommendedName>
    <alternativeName>
        <fullName evidence="3">30S ribosomal protein S12</fullName>
    </alternativeName>
</protein>
<comment type="function">
    <text evidence="2">With S4 and S5 plays an important role in translational accuracy.</text>
</comment>
<comment type="function">
    <text evidence="2">Interacts with and stabilizes bases of the 16S rRNA that are involved in tRNA selection in the A site and with the mRNA backbone. Located at the interface of the 30S and 50S subunits, it traverses the body of the 30S subunit contacting proteins on the other side and probably holding the rRNA structure together. The combined cluster of proteins S8, S12 and S17 appears to hold together the shoulder and platform of the 30S subunit.</text>
</comment>
<comment type="subunit">
    <text evidence="2">Part of the 30S ribosomal subunit. Contacts proteins S8 and S17. May interact with IF1 in the 30S initiation complex.</text>
</comment>
<comment type="similarity">
    <text evidence="2">Belongs to the universal ribosomal protein uS12 family.</text>
</comment>
<evidence type="ECO:0000250" key="1"/>
<evidence type="ECO:0000255" key="2">
    <source>
        <dbReference type="HAMAP-Rule" id="MF_00403"/>
    </source>
</evidence>
<evidence type="ECO:0000305" key="3"/>
<keyword id="KW-0488">Methylation</keyword>
<keyword id="KW-1185">Reference proteome</keyword>
<keyword id="KW-0687">Ribonucleoprotein</keyword>
<keyword id="KW-0689">Ribosomal protein</keyword>
<keyword id="KW-0694">RNA-binding</keyword>
<keyword id="KW-0699">rRNA-binding</keyword>
<keyword id="KW-0820">tRNA-binding</keyword>
<dbReference type="EMBL" id="CP001616">
    <property type="protein sequence ID" value="ACQ94370.1"/>
    <property type="molecule type" value="Genomic_DNA"/>
</dbReference>
<dbReference type="RefSeq" id="WP_015879819.1">
    <property type="nucleotide sequence ID" value="NC_012691.1"/>
</dbReference>
<dbReference type="SMR" id="C4LBU6"/>
<dbReference type="STRING" id="595494.Tola_2777"/>
<dbReference type="KEGG" id="tau:Tola_2777"/>
<dbReference type="eggNOG" id="COG0048">
    <property type="taxonomic scope" value="Bacteria"/>
</dbReference>
<dbReference type="HOGENOM" id="CLU_104295_1_2_6"/>
<dbReference type="OrthoDB" id="9802366at2"/>
<dbReference type="Proteomes" id="UP000009073">
    <property type="component" value="Chromosome"/>
</dbReference>
<dbReference type="GO" id="GO:0015935">
    <property type="term" value="C:small ribosomal subunit"/>
    <property type="evidence" value="ECO:0007669"/>
    <property type="project" value="InterPro"/>
</dbReference>
<dbReference type="GO" id="GO:0019843">
    <property type="term" value="F:rRNA binding"/>
    <property type="evidence" value="ECO:0007669"/>
    <property type="project" value="UniProtKB-UniRule"/>
</dbReference>
<dbReference type="GO" id="GO:0003735">
    <property type="term" value="F:structural constituent of ribosome"/>
    <property type="evidence" value="ECO:0007669"/>
    <property type="project" value="InterPro"/>
</dbReference>
<dbReference type="GO" id="GO:0000049">
    <property type="term" value="F:tRNA binding"/>
    <property type="evidence" value="ECO:0007669"/>
    <property type="project" value="UniProtKB-UniRule"/>
</dbReference>
<dbReference type="GO" id="GO:0006412">
    <property type="term" value="P:translation"/>
    <property type="evidence" value="ECO:0007669"/>
    <property type="project" value="UniProtKB-UniRule"/>
</dbReference>
<dbReference type="CDD" id="cd03368">
    <property type="entry name" value="Ribosomal_S12"/>
    <property type="match status" value="1"/>
</dbReference>
<dbReference type="FunFam" id="2.40.50.140:FF:000001">
    <property type="entry name" value="30S ribosomal protein S12"/>
    <property type="match status" value="1"/>
</dbReference>
<dbReference type="Gene3D" id="2.40.50.140">
    <property type="entry name" value="Nucleic acid-binding proteins"/>
    <property type="match status" value="1"/>
</dbReference>
<dbReference type="HAMAP" id="MF_00403_B">
    <property type="entry name" value="Ribosomal_uS12_B"/>
    <property type="match status" value="1"/>
</dbReference>
<dbReference type="InterPro" id="IPR012340">
    <property type="entry name" value="NA-bd_OB-fold"/>
</dbReference>
<dbReference type="InterPro" id="IPR006032">
    <property type="entry name" value="Ribosomal_uS12"/>
</dbReference>
<dbReference type="InterPro" id="IPR005679">
    <property type="entry name" value="Ribosomal_uS12_bac"/>
</dbReference>
<dbReference type="NCBIfam" id="TIGR00981">
    <property type="entry name" value="rpsL_bact"/>
    <property type="match status" value="1"/>
</dbReference>
<dbReference type="PANTHER" id="PTHR11652">
    <property type="entry name" value="30S RIBOSOMAL PROTEIN S12 FAMILY MEMBER"/>
    <property type="match status" value="1"/>
</dbReference>
<dbReference type="Pfam" id="PF00164">
    <property type="entry name" value="Ribosom_S12_S23"/>
    <property type="match status" value="1"/>
</dbReference>
<dbReference type="PIRSF" id="PIRSF002133">
    <property type="entry name" value="Ribosomal_S12/S23"/>
    <property type="match status" value="1"/>
</dbReference>
<dbReference type="PRINTS" id="PR01034">
    <property type="entry name" value="RIBOSOMALS12"/>
</dbReference>
<dbReference type="SUPFAM" id="SSF50249">
    <property type="entry name" value="Nucleic acid-binding proteins"/>
    <property type="match status" value="1"/>
</dbReference>
<dbReference type="PROSITE" id="PS00055">
    <property type="entry name" value="RIBOSOMAL_S12"/>
    <property type="match status" value="1"/>
</dbReference>
<accession>C4LBU6</accession>
<feature type="chain" id="PRO_1000205929" description="Small ribosomal subunit protein uS12">
    <location>
        <begin position="1"/>
        <end position="124"/>
    </location>
</feature>
<feature type="modified residue" description="3-methylthioaspartic acid" evidence="1">
    <location>
        <position position="89"/>
    </location>
</feature>
<reference key="1">
    <citation type="submission" date="2009-05" db="EMBL/GenBank/DDBJ databases">
        <title>Complete sequence of Tolumonas auensis DSM 9187.</title>
        <authorList>
            <consortium name="US DOE Joint Genome Institute"/>
            <person name="Lucas S."/>
            <person name="Copeland A."/>
            <person name="Lapidus A."/>
            <person name="Glavina del Rio T."/>
            <person name="Tice H."/>
            <person name="Bruce D."/>
            <person name="Goodwin L."/>
            <person name="Pitluck S."/>
            <person name="Chertkov O."/>
            <person name="Brettin T."/>
            <person name="Detter J.C."/>
            <person name="Han C."/>
            <person name="Larimer F."/>
            <person name="Land M."/>
            <person name="Hauser L."/>
            <person name="Kyrpides N."/>
            <person name="Mikhailova N."/>
            <person name="Spring S."/>
            <person name="Beller H."/>
        </authorList>
    </citation>
    <scope>NUCLEOTIDE SEQUENCE [LARGE SCALE GENOMIC DNA]</scope>
    <source>
        <strain>DSM 9187 / NBRC 110442 / TA 4</strain>
    </source>
</reference>
<sequence>MATINQLVRKPRVKQVVKSSVPALNACPQKRGVCTRVYTTTPKKPNSALRKVCRVRLTNGFEVTSYIGGEGHNLQEHSVVLIRGGRVKDLPGVRYHTVRGALDCSGVKDRKQSRSKYGVKKPKA</sequence>
<name>RS12_TOLAT</name>
<proteinExistence type="inferred from homology"/>
<gene>
    <name evidence="2" type="primary">rpsL</name>
    <name type="ordered locus">Tola_2777</name>
</gene>
<organism>
    <name type="scientific">Tolumonas auensis (strain DSM 9187 / NBRC 110442 / TA 4)</name>
    <dbReference type="NCBI Taxonomy" id="595494"/>
    <lineage>
        <taxon>Bacteria</taxon>
        <taxon>Pseudomonadati</taxon>
        <taxon>Pseudomonadota</taxon>
        <taxon>Gammaproteobacteria</taxon>
        <taxon>Aeromonadales</taxon>
        <taxon>Aeromonadaceae</taxon>
        <taxon>Tolumonas</taxon>
    </lineage>
</organism>